<dbReference type="EC" id="5.5.1.6" evidence="1"/>
<dbReference type="EMBL" id="MG324005">
    <property type="protein sequence ID" value="AVR53897.1"/>
    <property type="molecule type" value="mRNA"/>
</dbReference>
<dbReference type="SMR" id="A0A2U7XUE3"/>
<dbReference type="SABIO-RK" id="A0A2U7XUE3"/>
<dbReference type="UniPathway" id="UPA00154"/>
<dbReference type="GO" id="GO:0005737">
    <property type="term" value="C:cytoplasm"/>
    <property type="evidence" value="ECO:0000314"/>
    <property type="project" value="UniProtKB"/>
</dbReference>
<dbReference type="GO" id="GO:0045430">
    <property type="term" value="F:chalcone isomerase activity"/>
    <property type="evidence" value="ECO:0007669"/>
    <property type="project" value="UniProtKB-EC"/>
</dbReference>
<dbReference type="GO" id="GO:0009813">
    <property type="term" value="P:flavonoid biosynthetic process"/>
    <property type="evidence" value="ECO:0007669"/>
    <property type="project" value="UniProtKB-UniPathway"/>
</dbReference>
<dbReference type="Gene3D" id="1.10.890.20">
    <property type="match status" value="1"/>
</dbReference>
<dbReference type="Gene3D" id="3.50.70.10">
    <property type="match status" value="1"/>
</dbReference>
<dbReference type="InterPro" id="IPR016087">
    <property type="entry name" value="Chalcone_isomerase"/>
</dbReference>
<dbReference type="InterPro" id="IPR016088">
    <property type="entry name" value="Chalcone_isomerase_3-sand"/>
</dbReference>
<dbReference type="InterPro" id="IPR016089">
    <property type="entry name" value="Chalcone_isomerase_bundle_sf"/>
</dbReference>
<dbReference type="InterPro" id="IPR036298">
    <property type="entry name" value="Chalcone_isomerase_sf"/>
</dbReference>
<dbReference type="InterPro" id="IPR044191">
    <property type="entry name" value="CHI3-like"/>
</dbReference>
<dbReference type="PANTHER" id="PTHR47588:SF1">
    <property type="entry name" value="CHALCONE--FLAVANONE ISOMERASE 3-RELATED"/>
    <property type="match status" value="1"/>
</dbReference>
<dbReference type="PANTHER" id="PTHR47588">
    <property type="entry name" value="CHALCONE--FLAVONONE ISOMERASE 3-RELATED"/>
    <property type="match status" value="1"/>
</dbReference>
<dbReference type="Pfam" id="PF02431">
    <property type="entry name" value="Chalcone"/>
    <property type="match status" value="1"/>
</dbReference>
<dbReference type="SUPFAM" id="SSF54626">
    <property type="entry name" value="Chalcone isomerase"/>
    <property type="match status" value="1"/>
</dbReference>
<reference key="1">
    <citation type="journal article" date="2018" name="Proc. Natl. Acad. Sci. U.S.A.">
        <title>Noncatalytic chalcone isomerase-fold proteins in Humulus lupulus are auxiliary components in prenylated flavonoid biosynthesis.</title>
        <authorList>
            <person name="Ban Z."/>
            <person name="Qin H."/>
            <person name="Mitchell A.J."/>
            <person name="Liu B."/>
            <person name="Zhang F."/>
            <person name="Weng J.-K."/>
            <person name="Dixon R.A."/>
            <person name="Wang G."/>
        </authorList>
    </citation>
    <scope>NUCLEOTIDE SEQUENCE [MRNA]</scope>
    <scope>FUNCTION</scope>
    <scope>PATHWAY</scope>
    <scope>TISSUE SPECIFICITY</scope>
    <scope>SUBCELLULAR LOCATION</scope>
    <scope>INTERACTION WITH CHS_H1 AND PT1L</scope>
</reference>
<reference key="2">
    <citation type="journal article" date="2019" name="Nat. Prod. Rep.">
        <title>Non-volatile natural products in plant glandular trichomes: chemistry, biological activities and biosynthesis.</title>
        <authorList>
            <person name="Liu Y."/>
            <person name="Jing S.-X."/>
            <person name="Luo S.-H."/>
            <person name="Li S.-H."/>
        </authorList>
    </citation>
    <scope>REVIEW</scope>
</reference>
<protein>
    <recommendedName>
        <fullName evidence="3">Chalcone isomerase-like protein 2</fullName>
        <shortName evidence="3">HlCHIL2</shortName>
        <ecNumber evidence="1">5.5.1.6</ecNumber>
    </recommendedName>
</protein>
<accession>A0A2U7XUE3</accession>
<gene>
    <name evidence="3" type="primary">CHIL2</name>
    <name evidence="4" type="synonym">HICHIL2</name>
</gene>
<organism>
    <name type="scientific">Humulus lupulus</name>
    <name type="common">European hop</name>
    <dbReference type="NCBI Taxonomy" id="3486"/>
    <lineage>
        <taxon>Eukaryota</taxon>
        <taxon>Viridiplantae</taxon>
        <taxon>Streptophyta</taxon>
        <taxon>Embryophyta</taxon>
        <taxon>Tracheophyta</taxon>
        <taxon>Spermatophyta</taxon>
        <taxon>Magnoliopsida</taxon>
        <taxon>eudicotyledons</taxon>
        <taxon>Gunneridae</taxon>
        <taxon>Pentapetalae</taxon>
        <taxon>rosids</taxon>
        <taxon>fabids</taxon>
        <taxon>Rosales</taxon>
        <taxon>Cannabaceae</taxon>
        <taxon>Humulus</taxon>
    </lineage>
</organism>
<comment type="function">
    <text evidence="1 2 6">Involved in the biosynthesis of prenylated phenolics natural products which contribute to the bitter taste of beer and display broad biological activities (Probable). Involved in anthocyanin biosynthesis (By similarity). Polyketide binding proteins (PBP) which promotes the catalytic activities of CHS_H1 and PT1L and triggers demethylxanthohumol (DMX) production (PubMed:29760092).</text>
</comment>
<comment type="catalytic activity">
    <reaction evidence="1">
        <text>a chalcone = a flavanone.</text>
        <dbReference type="EC" id="5.5.1.6"/>
    </reaction>
</comment>
<comment type="pathway">
    <text evidence="2">Secondary metabolite biosynthesis; flavonoid biosynthesis.</text>
</comment>
<comment type="subunit">
    <text evidence="2">Component an active demethylxanthohumol (DMX) biosynthetic metabolon in glandular trichomes (lupulin glands) that encompasses a chalcone synthase (CHS) and a membrane-bound prenyltransferase (PubMed:29760092). Interacts with CHS_H1 and PT1L (PubMed:29760092).</text>
</comment>
<comment type="subcellular location">
    <subcellularLocation>
        <location evidence="2">Cytoplasm</location>
    </subcellularLocation>
</comment>
<comment type="tissue specificity">
    <text evidence="2">Mostly expressed in glandular trichomes (lupulin glands), and, to a lower extent, in cones, cones bracts, leaves, stems and roots.</text>
</comment>
<comment type="similarity">
    <text evidence="5">Belongs to the chalcone isomerase family.</text>
</comment>
<evidence type="ECO:0000250" key="1">
    <source>
        <dbReference type="UniProtKB" id="Q8VZW3"/>
    </source>
</evidence>
<evidence type="ECO:0000269" key="2">
    <source>
    </source>
</evidence>
<evidence type="ECO:0000303" key="3">
    <source>
    </source>
</evidence>
<evidence type="ECO:0000303" key="4">
    <source>
    </source>
</evidence>
<evidence type="ECO:0000305" key="5"/>
<evidence type="ECO:0000305" key="6">
    <source>
    </source>
</evidence>
<sequence>MENNMVMVHEIPFPPEIKTTKPLSLLGYGITDMEIHFLQVKFTAIGVYLDSDVVKHLQQWKGKKGNELAEDDDFFDALISAPVEKYLRIVVIKEIKGSQYGVQLESSVRDRLAAEDMYEEEEEAALEKIVEFLQSKYFKKDTLITFHFPATSPTAEIVVTLEGKEESKLKVENKNVVDMIKKWYLGGTSGVSPSTISSLADNLSAELSK</sequence>
<name>CHIL2_HUMLU</name>
<keyword id="KW-0963">Cytoplasm</keyword>
<keyword id="KW-0284">Flavonoid biosynthesis</keyword>
<keyword id="KW-0413">Isomerase</keyword>
<proteinExistence type="evidence at protein level"/>
<feature type="chain" id="PRO_0000452945" description="Chalcone isomerase-like protein 2">
    <location>
        <begin position="1"/>
        <end position="209"/>
    </location>
</feature>